<sequence length="237" mass="25806">MVKKTSGRGQRDLKVKVKTARGRKLSSTRWLERQLNDPYVAAARRDGYRGRAAYKIIDLDDKYRFLVPGARVVDLGCAPGGWCQVAVKRVNALGEKSGKAVGRIIGLDLQEMEPIAGCELHQLDFMEDDADLKVKDWLGGRADVVMSDMAASASGHKQTDHMRIMALCEAAAELAFDVLEPGGTFVAKVLAGGAEGTLQRLLKQRFKKVANVKPGASRADSSEKFVVATGFRGRDEA</sequence>
<reference key="1">
    <citation type="submission" date="2006-02" db="EMBL/GenBank/DDBJ databases">
        <title>Complete sequence of chromosome of Jannaschia sp. CCS1.</title>
        <authorList>
            <consortium name="US DOE Joint Genome Institute"/>
            <person name="Copeland A."/>
            <person name="Lucas S."/>
            <person name="Lapidus A."/>
            <person name="Barry K."/>
            <person name="Detter J.C."/>
            <person name="Glavina del Rio T."/>
            <person name="Hammon N."/>
            <person name="Israni S."/>
            <person name="Pitluck S."/>
            <person name="Brettin T."/>
            <person name="Bruce D."/>
            <person name="Han C."/>
            <person name="Tapia R."/>
            <person name="Gilna P."/>
            <person name="Chertkov O."/>
            <person name="Saunders E."/>
            <person name="Schmutz J."/>
            <person name="Larimer F."/>
            <person name="Land M."/>
            <person name="Kyrpides N."/>
            <person name="Lykidis A."/>
            <person name="Moran M.A."/>
            <person name="Belas R."/>
            <person name="Ye W."/>
            <person name="Buchan A."/>
            <person name="Gonzalez J.M."/>
            <person name="Schell M.A."/>
            <person name="Richardson P."/>
        </authorList>
    </citation>
    <scope>NUCLEOTIDE SEQUENCE [LARGE SCALE GENOMIC DNA]</scope>
    <source>
        <strain>CCS1</strain>
    </source>
</reference>
<dbReference type="EC" id="2.1.1.166" evidence="1"/>
<dbReference type="EMBL" id="CP000264">
    <property type="protein sequence ID" value="ABD54898.1"/>
    <property type="molecule type" value="Genomic_DNA"/>
</dbReference>
<dbReference type="RefSeq" id="WP_011455103.1">
    <property type="nucleotide sequence ID" value="NC_007802.1"/>
</dbReference>
<dbReference type="SMR" id="Q28QW4"/>
<dbReference type="STRING" id="290400.Jann_1981"/>
<dbReference type="KEGG" id="jan:Jann_1981"/>
<dbReference type="eggNOG" id="COG0293">
    <property type="taxonomic scope" value="Bacteria"/>
</dbReference>
<dbReference type="HOGENOM" id="CLU_009422_4_0_5"/>
<dbReference type="OrthoDB" id="9790080at2"/>
<dbReference type="Proteomes" id="UP000008326">
    <property type="component" value="Chromosome"/>
</dbReference>
<dbReference type="GO" id="GO:0005737">
    <property type="term" value="C:cytoplasm"/>
    <property type="evidence" value="ECO:0007669"/>
    <property type="project" value="UniProtKB-SubCell"/>
</dbReference>
<dbReference type="GO" id="GO:0008650">
    <property type="term" value="F:rRNA (uridine-2'-O-)-methyltransferase activity"/>
    <property type="evidence" value="ECO:0007669"/>
    <property type="project" value="UniProtKB-UniRule"/>
</dbReference>
<dbReference type="Gene3D" id="3.40.50.150">
    <property type="entry name" value="Vaccinia Virus protein VP39"/>
    <property type="match status" value="1"/>
</dbReference>
<dbReference type="HAMAP" id="MF_01547">
    <property type="entry name" value="RNA_methyltr_E"/>
    <property type="match status" value="1"/>
</dbReference>
<dbReference type="InterPro" id="IPR050082">
    <property type="entry name" value="RNA_methyltr_RlmE"/>
</dbReference>
<dbReference type="InterPro" id="IPR002877">
    <property type="entry name" value="RNA_MeTrfase_FtsJ_dom"/>
</dbReference>
<dbReference type="InterPro" id="IPR015507">
    <property type="entry name" value="rRNA-MeTfrase_E"/>
</dbReference>
<dbReference type="InterPro" id="IPR029063">
    <property type="entry name" value="SAM-dependent_MTases_sf"/>
</dbReference>
<dbReference type="PANTHER" id="PTHR10920">
    <property type="entry name" value="RIBOSOMAL RNA METHYLTRANSFERASE"/>
    <property type="match status" value="1"/>
</dbReference>
<dbReference type="PANTHER" id="PTHR10920:SF18">
    <property type="entry name" value="RRNA METHYLTRANSFERASE 2, MITOCHONDRIAL"/>
    <property type="match status" value="1"/>
</dbReference>
<dbReference type="Pfam" id="PF01728">
    <property type="entry name" value="FtsJ"/>
    <property type="match status" value="1"/>
</dbReference>
<dbReference type="PIRSF" id="PIRSF005461">
    <property type="entry name" value="23S_rRNA_mtase"/>
    <property type="match status" value="1"/>
</dbReference>
<dbReference type="SUPFAM" id="SSF53335">
    <property type="entry name" value="S-adenosyl-L-methionine-dependent methyltransferases"/>
    <property type="match status" value="1"/>
</dbReference>
<comment type="function">
    <text evidence="1">Specifically methylates the uridine in position 2552 of 23S rRNA at the 2'-O position of the ribose in the fully assembled 50S ribosomal subunit.</text>
</comment>
<comment type="catalytic activity">
    <reaction evidence="1">
        <text>uridine(2552) in 23S rRNA + S-adenosyl-L-methionine = 2'-O-methyluridine(2552) in 23S rRNA + S-adenosyl-L-homocysteine + H(+)</text>
        <dbReference type="Rhea" id="RHEA:42720"/>
        <dbReference type="Rhea" id="RHEA-COMP:10202"/>
        <dbReference type="Rhea" id="RHEA-COMP:10203"/>
        <dbReference type="ChEBI" id="CHEBI:15378"/>
        <dbReference type="ChEBI" id="CHEBI:57856"/>
        <dbReference type="ChEBI" id="CHEBI:59789"/>
        <dbReference type="ChEBI" id="CHEBI:65315"/>
        <dbReference type="ChEBI" id="CHEBI:74478"/>
        <dbReference type="EC" id="2.1.1.166"/>
    </reaction>
</comment>
<comment type="subcellular location">
    <subcellularLocation>
        <location evidence="1">Cytoplasm</location>
    </subcellularLocation>
</comment>
<comment type="similarity">
    <text evidence="1">Belongs to the class I-like SAM-binding methyltransferase superfamily. RNA methyltransferase RlmE family.</text>
</comment>
<gene>
    <name evidence="1" type="primary">rlmE</name>
    <name evidence="1" type="synonym">ftsJ</name>
    <name evidence="1" type="synonym">rrmJ</name>
    <name type="ordered locus">Jann_1981</name>
</gene>
<feature type="chain" id="PRO_0000282755" description="Ribosomal RNA large subunit methyltransferase E">
    <location>
        <begin position="1"/>
        <end position="237"/>
    </location>
</feature>
<feature type="active site" description="Proton acceptor" evidence="1">
    <location>
        <position position="188"/>
    </location>
</feature>
<feature type="binding site" evidence="1">
    <location>
        <position position="80"/>
    </location>
    <ligand>
        <name>S-adenosyl-L-methionine</name>
        <dbReference type="ChEBI" id="CHEBI:59789"/>
    </ligand>
</feature>
<feature type="binding site" evidence="1">
    <location>
        <position position="82"/>
    </location>
    <ligand>
        <name>S-adenosyl-L-methionine</name>
        <dbReference type="ChEBI" id="CHEBI:59789"/>
    </ligand>
</feature>
<feature type="binding site" evidence="1">
    <location>
        <position position="108"/>
    </location>
    <ligand>
        <name>S-adenosyl-L-methionine</name>
        <dbReference type="ChEBI" id="CHEBI:59789"/>
    </ligand>
</feature>
<feature type="binding site" evidence="1">
    <location>
        <position position="124"/>
    </location>
    <ligand>
        <name>S-adenosyl-L-methionine</name>
        <dbReference type="ChEBI" id="CHEBI:59789"/>
    </ligand>
</feature>
<feature type="binding site" evidence="1">
    <location>
        <position position="148"/>
    </location>
    <ligand>
        <name>S-adenosyl-L-methionine</name>
        <dbReference type="ChEBI" id="CHEBI:59789"/>
    </ligand>
</feature>
<organism>
    <name type="scientific">Jannaschia sp. (strain CCS1)</name>
    <dbReference type="NCBI Taxonomy" id="290400"/>
    <lineage>
        <taxon>Bacteria</taxon>
        <taxon>Pseudomonadati</taxon>
        <taxon>Pseudomonadota</taxon>
        <taxon>Alphaproteobacteria</taxon>
        <taxon>Rhodobacterales</taxon>
        <taxon>Roseobacteraceae</taxon>
        <taxon>Jannaschia</taxon>
    </lineage>
</organism>
<protein>
    <recommendedName>
        <fullName evidence="1">Ribosomal RNA large subunit methyltransferase E</fullName>
        <ecNumber evidence="1">2.1.1.166</ecNumber>
    </recommendedName>
    <alternativeName>
        <fullName evidence="1">23S rRNA Um2552 methyltransferase</fullName>
    </alternativeName>
    <alternativeName>
        <fullName evidence="1">rRNA (uridine-2'-O-)-methyltransferase</fullName>
    </alternativeName>
</protein>
<evidence type="ECO:0000255" key="1">
    <source>
        <dbReference type="HAMAP-Rule" id="MF_01547"/>
    </source>
</evidence>
<name>RLME_JANSC</name>
<accession>Q28QW4</accession>
<keyword id="KW-0963">Cytoplasm</keyword>
<keyword id="KW-0489">Methyltransferase</keyword>
<keyword id="KW-1185">Reference proteome</keyword>
<keyword id="KW-0698">rRNA processing</keyword>
<keyword id="KW-0949">S-adenosyl-L-methionine</keyword>
<keyword id="KW-0808">Transferase</keyword>
<proteinExistence type="inferred from homology"/>